<dbReference type="EMBL" id="CP000744">
    <property type="protein sequence ID" value="ABR86752.1"/>
    <property type="molecule type" value="Genomic_DNA"/>
</dbReference>
<dbReference type="RefSeq" id="WP_003094760.1">
    <property type="nucleotide sequence ID" value="NC_009656.1"/>
</dbReference>
<dbReference type="SMR" id="A6VBV4"/>
<dbReference type="GeneID" id="77223074"/>
<dbReference type="KEGG" id="pap:PSPA7_5207"/>
<dbReference type="HOGENOM" id="CLU_095424_4_1_6"/>
<dbReference type="Proteomes" id="UP000001582">
    <property type="component" value="Chromosome"/>
</dbReference>
<dbReference type="GO" id="GO:0022625">
    <property type="term" value="C:cytosolic large ribosomal subunit"/>
    <property type="evidence" value="ECO:0007669"/>
    <property type="project" value="TreeGrafter"/>
</dbReference>
<dbReference type="GO" id="GO:0003735">
    <property type="term" value="F:structural constituent of ribosome"/>
    <property type="evidence" value="ECO:0007669"/>
    <property type="project" value="InterPro"/>
</dbReference>
<dbReference type="GO" id="GO:0006412">
    <property type="term" value="P:translation"/>
    <property type="evidence" value="ECO:0007669"/>
    <property type="project" value="UniProtKB-UniRule"/>
</dbReference>
<dbReference type="FunFam" id="2.40.50.100:FF:000001">
    <property type="entry name" value="50S ribosomal protein L27"/>
    <property type="match status" value="1"/>
</dbReference>
<dbReference type="Gene3D" id="2.40.50.100">
    <property type="match status" value="1"/>
</dbReference>
<dbReference type="HAMAP" id="MF_00539">
    <property type="entry name" value="Ribosomal_bL27"/>
    <property type="match status" value="1"/>
</dbReference>
<dbReference type="InterPro" id="IPR001684">
    <property type="entry name" value="Ribosomal_bL27"/>
</dbReference>
<dbReference type="InterPro" id="IPR018261">
    <property type="entry name" value="Ribosomal_bL27_CS"/>
</dbReference>
<dbReference type="NCBIfam" id="TIGR00062">
    <property type="entry name" value="L27"/>
    <property type="match status" value="1"/>
</dbReference>
<dbReference type="PANTHER" id="PTHR15893:SF0">
    <property type="entry name" value="LARGE RIBOSOMAL SUBUNIT PROTEIN BL27M"/>
    <property type="match status" value="1"/>
</dbReference>
<dbReference type="PANTHER" id="PTHR15893">
    <property type="entry name" value="RIBOSOMAL PROTEIN L27"/>
    <property type="match status" value="1"/>
</dbReference>
<dbReference type="Pfam" id="PF01016">
    <property type="entry name" value="Ribosomal_L27"/>
    <property type="match status" value="1"/>
</dbReference>
<dbReference type="PRINTS" id="PR00063">
    <property type="entry name" value="RIBOSOMALL27"/>
</dbReference>
<dbReference type="SUPFAM" id="SSF110324">
    <property type="entry name" value="Ribosomal L27 protein-like"/>
    <property type="match status" value="1"/>
</dbReference>
<dbReference type="PROSITE" id="PS00831">
    <property type="entry name" value="RIBOSOMAL_L27"/>
    <property type="match status" value="1"/>
</dbReference>
<evidence type="ECO:0000255" key="1">
    <source>
        <dbReference type="HAMAP-Rule" id="MF_00539"/>
    </source>
</evidence>
<evidence type="ECO:0000305" key="2"/>
<organism>
    <name type="scientific">Pseudomonas paraeruginosa (strain DSM 24068 / PA7)</name>
    <name type="common">Pseudomonas aeruginosa (strain PA7)</name>
    <dbReference type="NCBI Taxonomy" id="381754"/>
    <lineage>
        <taxon>Bacteria</taxon>
        <taxon>Pseudomonadati</taxon>
        <taxon>Pseudomonadota</taxon>
        <taxon>Gammaproteobacteria</taxon>
        <taxon>Pseudomonadales</taxon>
        <taxon>Pseudomonadaceae</taxon>
        <taxon>Pseudomonas</taxon>
        <taxon>Pseudomonas paraeruginosa</taxon>
    </lineage>
</organism>
<proteinExistence type="inferred from homology"/>
<comment type="similarity">
    <text evidence="1">Belongs to the bacterial ribosomal protein bL27 family.</text>
</comment>
<sequence>MAHKKAGGSTRNGRDSESKRLGVKLFGGQAVKAGNILVRQRGTKFHAGYGVGLGKDHTLFAKVDGVVKFETKGAFGRKYVSIVAA</sequence>
<protein>
    <recommendedName>
        <fullName evidence="1">Large ribosomal subunit protein bL27</fullName>
    </recommendedName>
    <alternativeName>
        <fullName evidence="2">50S ribosomal protein L27</fullName>
    </alternativeName>
</protein>
<keyword id="KW-0687">Ribonucleoprotein</keyword>
<keyword id="KW-0689">Ribosomal protein</keyword>
<feature type="chain" id="PRO_1000017557" description="Large ribosomal subunit protein bL27">
    <location>
        <begin position="1"/>
        <end position="85"/>
    </location>
</feature>
<gene>
    <name evidence="1" type="primary">rpmA</name>
    <name type="ordered locus">PSPA7_5207</name>
</gene>
<name>RL27_PSEP7</name>
<reference key="1">
    <citation type="submission" date="2007-06" db="EMBL/GenBank/DDBJ databases">
        <authorList>
            <person name="Dodson R.J."/>
            <person name="Harkins D."/>
            <person name="Paulsen I.T."/>
        </authorList>
    </citation>
    <scope>NUCLEOTIDE SEQUENCE [LARGE SCALE GENOMIC DNA]</scope>
    <source>
        <strain>DSM 24068 / PA7</strain>
    </source>
</reference>
<accession>A6VBV4</accession>